<protein>
    <recommendedName>
        <fullName evidence="1">3-deoxy-manno-octulosonate cytidylyltransferase</fullName>
        <ecNumber evidence="1">2.7.7.38</ecNumber>
    </recommendedName>
    <alternativeName>
        <fullName evidence="1">CMP-2-keto-3-deoxyoctulosonic acid synthase</fullName>
        <shortName evidence="1">CKS</shortName>
        <shortName evidence="1">CMP-KDO synthase</shortName>
    </alternativeName>
</protein>
<dbReference type="EC" id="2.7.7.38" evidence="1"/>
<dbReference type="EMBL" id="CU928158">
    <property type="protein sequence ID" value="CAQ88591.1"/>
    <property type="molecule type" value="Genomic_DNA"/>
</dbReference>
<dbReference type="RefSeq" id="WP_000011564.1">
    <property type="nucleotide sequence ID" value="NC_011740.1"/>
</dbReference>
<dbReference type="SMR" id="B7LN80"/>
<dbReference type="GeneID" id="75057887"/>
<dbReference type="KEGG" id="efe:EFER_1062"/>
<dbReference type="HOGENOM" id="CLU_065038_1_0_6"/>
<dbReference type="OrthoDB" id="9815559at2"/>
<dbReference type="UniPathway" id="UPA00030"/>
<dbReference type="UniPathway" id="UPA00358">
    <property type="reaction ID" value="UER00476"/>
</dbReference>
<dbReference type="Proteomes" id="UP000000745">
    <property type="component" value="Chromosome"/>
</dbReference>
<dbReference type="GO" id="GO:0005829">
    <property type="term" value="C:cytosol"/>
    <property type="evidence" value="ECO:0007669"/>
    <property type="project" value="TreeGrafter"/>
</dbReference>
<dbReference type="GO" id="GO:0008690">
    <property type="term" value="F:3-deoxy-manno-octulosonate cytidylyltransferase activity"/>
    <property type="evidence" value="ECO:0007669"/>
    <property type="project" value="UniProtKB-UniRule"/>
</dbReference>
<dbReference type="GO" id="GO:0033468">
    <property type="term" value="P:CMP-keto-3-deoxy-D-manno-octulosonic acid biosynthetic process"/>
    <property type="evidence" value="ECO:0007669"/>
    <property type="project" value="UniProtKB-UniRule"/>
</dbReference>
<dbReference type="GO" id="GO:0009103">
    <property type="term" value="P:lipopolysaccharide biosynthetic process"/>
    <property type="evidence" value="ECO:0007669"/>
    <property type="project" value="UniProtKB-UniRule"/>
</dbReference>
<dbReference type="CDD" id="cd02517">
    <property type="entry name" value="CMP-KDO-Synthetase"/>
    <property type="match status" value="1"/>
</dbReference>
<dbReference type="FunFam" id="3.90.550.10:FF:000011">
    <property type="entry name" value="3-deoxy-manno-octulosonate cytidylyltransferase"/>
    <property type="match status" value="1"/>
</dbReference>
<dbReference type="Gene3D" id="3.90.550.10">
    <property type="entry name" value="Spore Coat Polysaccharide Biosynthesis Protein SpsA, Chain A"/>
    <property type="match status" value="1"/>
</dbReference>
<dbReference type="HAMAP" id="MF_00057">
    <property type="entry name" value="KdsB"/>
    <property type="match status" value="1"/>
</dbReference>
<dbReference type="InterPro" id="IPR003329">
    <property type="entry name" value="Cytidylyl_trans"/>
</dbReference>
<dbReference type="InterPro" id="IPR004528">
    <property type="entry name" value="KdsB"/>
</dbReference>
<dbReference type="InterPro" id="IPR029044">
    <property type="entry name" value="Nucleotide-diphossugar_trans"/>
</dbReference>
<dbReference type="NCBIfam" id="TIGR00466">
    <property type="entry name" value="kdsB"/>
    <property type="match status" value="1"/>
</dbReference>
<dbReference type="NCBIfam" id="NF003950">
    <property type="entry name" value="PRK05450.1-3"/>
    <property type="match status" value="1"/>
</dbReference>
<dbReference type="NCBIfam" id="NF003952">
    <property type="entry name" value="PRK05450.1-5"/>
    <property type="match status" value="1"/>
</dbReference>
<dbReference type="NCBIfam" id="NF009905">
    <property type="entry name" value="PRK13368.1"/>
    <property type="match status" value="1"/>
</dbReference>
<dbReference type="PANTHER" id="PTHR42866">
    <property type="entry name" value="3-DEOXY-MANNO-OCTULOSONATE CYTIDYLYLTRANSFERASE"/>
    <property type="match status" value="1"/>
</dbReference>
<dbReference type="PANTHER" id="PTHR42866:SF2">
    <property type="entry name" value="3-DEOXY-MANNO-OCTULOSONATE CYTIDYLYLTRANSFERASE, MITOCHONDRIAL"/>
    <property type="match status" value="1"/>
</dbReference>
<dbReference type="Pfam" id="PF02348">
    <property type="entry name" value="CTP_transf_3"/>
    <property type="match status" value="1"/>
</dbReference>
<dbReference type="SUPFAM" id="SSF53448">
    <property type="entry name" value="Nucleotide-diphospho-sugar transferases"/>
    <property type="match status" value="1"/>
</dbReference>
<reference key="1">
    <citation type="journal article" date="2009" name="PLoS Genet.">
        <title>Organised genome dynamics in the Escherichia coli species results in highly diverse adaptive paths.</title>
        <authorList>
            <person name="Touchon M."/>
            <person name="Hoede C."/>
            <person name="Tenaillon O."/>
            <person name="Barbe V."/>
            <person name="Baeriswyl S."/>
            <person name="Bidet P."/>
            <person name="Bingen E."/>
            <person name="Bonacorsi S."/>
            <person name="Bouchier C."/>
            <person name="Bouvet O."/>
            <person name="Calteau A."/>
            <person name="Chiapello H."/>
            <person name="Clermont O."/>
            <person name="Cruveiller S."/>
            <person name="Danchin A."/>
            <person name="Diard M."/>
            <person name="Dossat C."/>
            <person name="Karoui M.E."/>
            <person name="Frapy E."/>
            <person name="Garry L."/>
            <person name="Ghigo J.M."/>
            <person name="Gilles A.M."/>
            <person name="Johnson J."/>
            <person name="Le Bouguenec C."/>
            <person name="Lescat M."/>
            <person name="Mangenot S."/>
            <person name="Martinez-Jehanne V."/>
            <person name="Matic I."/>
            <person name="Nassif X."/>
            <person name="Oztas S."/>
            <person name="Petit M.A."/>
            <person name="Pichon C."/>
            <person name="Rouy Z."/>
            <person name="Ruf C.S."/>
            <person name="Schneider D."/>
            <person name="Tourret J."/>
            <person name="Vacherie B."/>
            <person name="Vallenet D."/>
            <person name="Medigue C."/>
            <person name="Rocha E.P.C."/>
            <person name="Denamur E."/>
        </authorList>
    </citation>
    <scope>NUCLEOTIDE SEQUENCE [LARGE SCALE GENOMIC DNA]</scope>
    <source>
        <strain>ATCC 35469 / DSM 13698 / BCRC 15582 / CCUG 18766 / IAM 14443 / JCM 21226 / LMG 7866 / NBRC 102419 / NCTC 12128 / CDC 0568-73</strain>
    </source>
</reference>
<sequence length="248" mass="27558">MSFVVIIPARFASTRLPGKPLLDINGKPMIVHVLERARESGAERIIVATDHEDVARAVEAAGGEVCMTRADHQSGTERLAEVVEKCGFSDDTVIVNVQGDEPMIPAVIIRQVAENLAQRQVGMATLAAPVHSAEEAFNPNVVKVVLDSEGYALYFSRATIPWDRDRFAKGLETVGDNFLRHLGIYGYRAGFIRRYVNWQPSPLEHIEMLEQLRVLWYGEKIHVAVAEQVPGTGVDTAEDLERVRAEMR</sequence>
<accession>B7LN80</accession>
<keyword id="KW-0963">Cytoplasm</keyword>
<keyword id="KW-0448">Lipopolysaccharide biosynthesis</keyword>
<keyword id="KW-0548">Nucleotidyltransferase</keyword>
<keyword id="KW-0808">Transferase</keyword>
<organism>
    <name type="scientific">Escherichia fergusonii (strain ATCC 35469 / DSM 13698 / CCUG 18766 / IAM 14443 / JCM 21226 / LMG 7866 / NBRC 102419 / NCTC 12128 / CDC 0568-73)</name>
    <dbReference type="NCBI Taxonomy" id="585054"/>
    <lineage>
        <taxon>Bacteria</taxon>
        <taxon>Pseudomonadati</taxon>
        <taxon>Pseudomonadota</taxon>
        <taxon>Gammaproteobacteria</taxon>
        <taxon>Enterobacterales</taxon>
        <taxon>Enterobacteriaceae</taxon>
        <taxon>Escherichia</taxon>
    </lineage>
</organism>
<feature type="chain" id="PRO_1000116888" description="3-deoxy-manno-octulosonate cytidylyltransferase">
    <location>
        <begin position="1"/>
        <end position="248"/>
    </location>
</feature>
<name>KDSB_ESCF3</name>
<gene>
    <name evidence="1" type="primary">kdsB</name>
    <name type="ordered locus">EFER_1062</name>
</gene>
<evidence type="ECO:0000255" key="1">
    <source>
        <dbReference type="HAMAP-Rule" id="MF_00057"/>
    </source>
</evidence>
<proteinExistence type="inferred from homology"/>
<comment type="function">
    <text evidence="1">Activates KDO (a required 8-carbon sugar) for incorporation into bacterial lipopolysaccharide in Gram-negative bacteria.</text>
</comment>
<comment type="catalytic activity">
    <reaction evidence="1">
        <text>3-deoxy-alpha-D-manno-oct-2-ulosonate + CTP = CMP-3-deoxy-beta-D-manno-octulosonate + diphosphate</text>
        <dbReference type="Rhea" id="RHEA:23448"/>
        <dbReference type="ChEBI" id="CHEBI:33019"/>
        <dbReference type="ChEBI" id="CHEBI:37563"/>
        <dbReference type="ChEBI" id="CHEBI:85986"/>
        <dbReference type="ChEBI" id="CHEBI:85987"/>
        <dbReference type="EC" id="2.7.7.38"/>
    </reaction>
</comment>
<comment type="pathway">
    <text evidence="1">Nucleotide-sugar biosynthesis; CMP-3-deoxy-D-manno-octulosonate biosynthesis; CMP-3-deoxy-D-manno-octulosonate from 3-deoxy-D-manno-octulosonate and CTP: step 1/1.</text>
</comment>
<comment type="pathway">
    <text evidence="1">Bacterial outer membrane biogenesis; lipopolysaccharide biosynthesis.</text>
</comment>
<comment type="subcellular location">
    <subcellularLocation>
        <location evidence="1">Cytoplasm</location>
    </subcellularLocation>
</comment>
<comment type="similarity">
    <text evidence="1">Belongs to the KdsB family.</text>
</comment>